<gene>
    <name evidence="3" type="primary">SPH27</name>
    <name evidence="6" type="ordered locus">At5g06020</name>
    <name evidence="7" type="ORF">K18J17.22</name>
</gene>
<dbReference type="EMBL" id="AB017060">
    <property type="protein sequence ID" value="BAB10807.1"/>
    <property type="molecule type" value="Genomic_DNA"/>
</dbReference>
<dbReference type="EMBL" id="CP002688">
    <property type="protein sequence ID" value="AED90955.1"/>
    <property type="molecule type" value="Genomic_DNA"/>
</dbReference>
<dbReference type="EMBL" id="DQ056671">
    <property type="protein sequence ID" value="AAY78817.1"/>
    <property type="molecule type" value="mRNA"/>
</dbReference>
<dbReference type="RefSeq" id="NP_196221.1">
    <property type="nucleotide sequence ID" value="NM_120684.1"/>
</dbReference>
<dbReference type="SMR" id="Q9FI84"/>
<dbReference type="GlyCosmos" id="Q9FI84">
    <property type="glycosylation" value="2 sites, No reported glycans"/>
</dbReference>
<dbReference type="GlyGen" id="Q9FI84">
    <property type="glycosylation" value="2 sites"/>
</dbReference>
<dbReference type="PaxDb" id="3702-AT5G06020.1"/>
<dbReference type="EnsemblPlants" id="AT5G06020.1">
    <property type="protein sequence ID" value="AT5G06020.1"/>
    <property type="gene ID" value="AT5G06020"/>
</dbReference>
<dbReference type="GeneID" id="830489"/>
<dbReference type="Gramene" id="AT5G06020.1">
    <property type="protein sequence ID" value="AT5G06020.1"/>
    <property type="gene ID" value="AT5G06020"/>
</dbReference>
<dbReference type="KEGG" id="ath:AT5G06020"/>
<dbReference type="Araport" id="AT5G06020"/>
<dbReference type="TAIR" id="AT5G06020"/>
<dbReference type="HOGENOM" id="CLU_125658_0_1_1"/>
<dbReference type="InParanoid" id="Q9FI84"/>
<dbReference type="OMA" id="WFTITIM"/>
<dbReference type="PhylomeDB" id="Q9FI84"/>
<dbReference type="PRO" id="PR:Q9FI84"/>
<dbReference type="Proteomes" id="UP000006548">
    <property type="component" value="Chromosome 5"/>
</dbReference>
<dbReference type="ExpressionAtlas" id="Q9FI84">
    <property type="expression patterns" value="baseline and differential"/>
</dbReference>
<dbReference type="GO" id="GO:0005576">
    <property type="term" value="C:extracellular region"/>
    <property type="evidence" value="ECO:0007669"/>
    <property type="project" value="UniProtKB-SubCell"/>
</dbReference>
<dbReference type="GO" id="GO:0060320">
    <property type="term" value="P:rejection of self pollen"/>
    <property type="evidence" value="ECO:0007669"/>
    <property type="project" value="UniProtKB-KW"/>
</dbReference>
<dbReference type="InterPro" id="IPR010264">
    <property type="entry name" value="Self-incomp_S1"/>
</dbReference>
<dbReference type="PANTHER" id="PTHR31232">
    <property type="match status" value="1"/>
</dbReference>
<dbReference type="PANTHER" id="PTHR31232:SF168">
    <property type="entry name" value="S-PROTEIN HOMOLOG 24-RELATED"/>
    <property type="match status" value="1"/>
</dbReference>
<dbReference type="Pfam" id="PF05938">
    <property type="entry name" value="Self-incomp_S1"/>
    <property type="match status" value="1"/>
</dbReference>
<sequence>MINSSSKKNLISTFSSMFTICIVMIFVTCYETFQQDGEPFPIRGPLTRITVKNNNDYLLGIHCKSKDDDLGFHIHKEGELYGWKFHVNFQNSTLYFCGFSQGQDNKGVFDIDRAERDFYRCRNCTWNAKKDSLYGYSNLPQTVTWFFKWLK</sequence>
<feature type="signal peptide" evidence="1">
    <location>
        <begin position="1"/>
        <end status="unknown"/>
    </location>
</feature>
<feature type="chain" id="PRO_0000439574" description="S-protein homolog 27">
    <location>
        <begin status="unknown"/>
        <end position="151"/>
    </location>
</feature>
<feature type="glycosylation site" description="N-linked (GlcNAc...) asparagine" evidence="2">
    <location>
        <position position="91"/>
    </location>
</feature>
<feature type="glycosylation site" description="N-linked (GlcNAc...) asparagine" evidence="2">
    <location>
        <position position="123"/>
    </location>
</feature>
<organism>
    <name type="scientific">Arabidopsis thaliana</name>
    <name type="common">Mouse-ear cress</name>
    <dbReference type="NCBI Taxonomy" id="3702"/>
    <lineage>
        <taxon>Eukaryota</taxon>
        <taxon>Viridiplantae</taxon>
        <taxon>Streptophyta</taxon>
        <taxon>Embryophyta</taxon>
        <taxon>Tracheophyta</taxon>
        <taxon>Spermatophyta</taxon>
        <taxon>Magnoliopsida</taxon>
        <taxon>eudicotyledons</taxon>
        <taxon>Gunneridae</taxon>
        <taxon>Pentapetalae</taxon>
        <taxon>rosids</taxon>
        <taxon>malvids</taxon>
        <taxon>Brassicales</taxon>
        <taxon>Brassicaceae</taxon>
        <taxon>Camelineae</taxon>
        <taxon>Arabidopsis</taxon>
    </lineage>
</organism>
<comment type="subcellular location">
    <subcellularLocation>
        <location evidence="5">Secreted</location>
    </subcellularLocation>
</comment>
<comment type="similarity">
    <text evidence="4">Belongs to the plant self-incompatibility (S1) protein family.</text>
</comment>
<reference key="1">
    <citation type="journal article" date="1999" name="DNA Res.">
        <title>Structural analysis of Arabidopsis thaliana chromosome 5. IX. Sequence features of the regions of 1,011,550 bp covered by seventeen P1 and TAC clones.</title>
        <authorList>
            <person name="Kaneko T."/>
            <person name="Katoh T."/>
            <person name="Sato S."/>
            <person name="Nakamura Y."/>
            <person name="Asamizu E."/>
            <person name="Kotani H."/>
            <person name="Miyajima N."/>
            <person name="Tabata S."/>
        </authorList>
    </citation>
    <scope>NUCLEOTIDE SEQUENCE [LARGE SCALE GENOMIC DNA]</scope>
    <source>
        <strain>cv. Columbia</strain>
    </source>
</reference>
<reference key="2">
    <citation type="journal article" date="2017" name="Plant J.">
        <title>Araport11: a complete reannotation of the Arabidopsis thaliana reference genome.</title>
        <authorList>
            <person name="Cheng C.Y."/>
            <person name="Krishnakumar V."/>
            <person name="Chan A.P."/>
            <person name="Thibaud-Nissen F."/>
            <person name="Schobel S."/>
            <person name="Town C.D."/>
        </authorList>
    </citation>
    <scope>GENOME REANNOTATION</scope>
    <source>
        <strain>cv. Columbia</strain>
    </source>
</reference>
<reference key="3">
    <citation type="submission" date="2005-05" db="EMBL/GenBank/DDBJ databases">
        <authorList>
            <person name="Underwood B.A."/>
            <person name="Xiao Y.-L."/>
            <person name="Moskal W.A. Jr."/>
            <person name="Monaghan E.L."/>
            <person name="Wang W."/>
            <person name="Redman J.C."/>
            <person name="Wu H.C."/>
            <person name="Utterback T."/>
            <person name="Town C.D."/>
        </authorList>
    </citation>
    <scope>NUCLEOTIDE SEQUENCE [LARGE SCALE MRNA]</scope>
    <source>
        <strain>cv. Columbia</strain>
    </source>
</reference>
<reference key="4">
    <citation type="journal article" date="1999" name="Plant Mol. Biol.">
        <title>Analysis of Arabidopsis genome sequence reveals a large new gene family in plants.</title>
        <authorList>
            <person name="Ride J.P."/>
            <person name="Davies E.M."/>
            <person name="Franklin F.C.H."/>
            <person name="Marshall D.F."/>
        </authorList>
    </citation>
    <scope>GENE FAMILY</scope>
    <scope>NOMENCLATURE</scope>
    <source>
        <strain>cv. Columbia</strain>
    </source>
</reference>
<name>SPH27_ARATH</name>
<evidence type="ECO:0000255" key="1"/>
<evidence type="ECO:0000255" key="2">
    <source>
        <dbReference type="PROSITE-ProRule" id="PRU00498"/>
    </source>
</evidence>
<evidence type="ECO:0000303" key="3">
    <source>
    </source>
</evidence>
<evidence type="ECO:0000305" key="4"/>
<evidence type="ECO:0000305" key="5">
    <source>
    </source>
</evidence>
<evidence type="ECO:0000312" key="6">
    <source>
        <dbReference type="Araport" id="AT5G06020"/>
    </source>
</evidence>
<evidence type="ECO:0000312" key="7">
    <source>
        <dbReference type="EMBL" id="BAB10807.1"/>
    </source>
</evidence>
<protein>
    <recommendedName>
        <fullName evidence="3">S-protein homolog 27</fullName>
    </recommendedName>
</protein>
<keyword id="KW-0325">Glycoprotein</keyword>
<keyword id="KW-1185">Reference proteome</keyword>
<keyword id="KW-0964">Secreted</keyword>
<keyword id="KW-0713">Self-incompatibility</keyword>
<keyword id="KW-0732">Signal</keyword>
<proteinExistence type="evidence at transcript level"/>
<accession>Q9FI84</accession>